<proteinExistence type="evidence at protein level"/>
<sequence>ITINVKCTSPQQCLRPCKDRFGQHAGGKCINGKCKCYP</sequence>
<name>KAX23_CENLI</name>
<feature type="peptide" id="PRO_0000044902" description="Potassium channel toxin alpha-KTx 2.3" evidence="3 4">
    <location>
        <begin position="1"/>
        <end position="38"/>
    </location>
</feature>
<feature type="site" description="Basic residue of the functional dyad" evidence="1">
    <location>
        <position position="28"/>
    </location>
</feature>
<feature type="site" description="Aromatic residue of the functional dyad" evidence="1">
    <location>
        <position position="37"/>
    </location>
</feature>
<feature type="disulfide bond" evidence="2">
    <location>
        <begin position="7"/>
        <end position="29"/>
    </location>
</feature>
<feature type="disulfide bond" evidence="2">
    <location>
        <begin position="13"/>
        <end position="34"/>
    </location>
</feature>
<feature type="disulfide bond" evidence="2">
    <location>
        <begin position="17"/>
        <end position="36"/>
    </location>
</feature>
<keyword id="KW-0903">Direct protein sequencing</keyword>
<keyword id="KW-1015">Disulfide bond</keyword>
<keyword id="KW-0872">Ion channel impairing toxin</keyword>
<keyword id="KW-0528">Neurotoxin</keyword>
<keyword id="KW-0632">Potassium channel impairing toxin</keyword>
<keyword id="KW-0964">Secreted</keyword>
<keyword id="KW-0800">Toxin</keyword>
<keyword id="KW-1220">Voltage-gated potassium channel impairing toxin</keyword>
<dbReference type="PIR" id="S53330">
    <property type="entry name" value="S53330"/>
</dbReference>
<dbReference type="SMR" id="P45629"/>
<dbReference type="GO" id="GO:0005576">
    <property type="term" value="C:extracellular region"/>
    <property type="evidence" value="ECO:0007669"/>
    <property type="project" value="UniProtKB-SubCell"/>
</dbReference>
<dbReference type="GO" id="GO:0008200">
    <property type="term" value="F:ion channel inhibitor activity"/>
    <property type="evidence" value="ECO:0007669"/>
    <property type="project" value="InterPro"/>
</dbReference>
<dbReference type="GO" id="GO:0015459">
    <property type="term" value="F:potassium channel regulator activity"/>
    <property type="evidence" value="ECO:0007669"/>
    <property type="project" value="UniProtKB-KW"/>
</dbReference>
<dbReference type="GO" id="GO:0090729">
    <property type="term" value="F:toxin activity"/>
    <property type="evidence" value="ECO:0007669"/>
    <property type="project" value="UniProtKB-KW"/>
</dbReference>
<dbReference type="FunFam" id="3.30.30.10:FF:000009">
    <property type="entry name" value="Potassium channel toxin alpha-KTx 4.3"/>
    <property type="match status" value="1"/>
</dbReference>
<dbReference type="Gene3D" id="3.30.30.10">
    <property type="entry name" value="Knottin, scorpion toxin-like"/>
    <property type="match status" value="1"/>
</dbReference>
<dbReference type="InterPro" id="IPR036574">
    <property type="entry name" value="Scorpion_toxin-like_sf"/>
</dbReference>
<dbReference type="InterPro" id="IPR001947">
    <property type="entry name" value="Scorpion_toxinS_K_inh"/>
</dbReference>
<dbReference type="Pfam" id="PF00451">
    <property type="entry name" value="Toxin_2"/>
    <property type="match status" value="1"/>
</dbReference>
<dbReference type="PRINTS" id="PR00286">
    <property type="entry name" value="CHARYBDTOXIN"/>
</dbReference>
<dbReference type="SUPFAM" id="SSF57095">
    <property type="entry name" value="Scorpion toxin-like"/>
    <property type="match status" value="1"/>
</dbReference>
<dbReference type="PROSITE" id="PS01138">
    <property type="entry name" value="SCORP_SHORT_TOXIN"/>
    <property type="match status" value="1"/>
</dbReference>
<organism>
    <name type="scientific">Centruroides limpidus</name>
    <name type="common">Mexican scorpion</name>
    <dbReference type="NCBI Taxonomy" id="6876"/>
    <lineage>
        <taxon>Eukaryota</taxon>
        <taxon>Metazoa</taxon>
        <taxon>Ecdysozoa</taxon>
        <taxon>Arthropoda</taxon>
        <taxon>Chelicerata</taxon>
        <taxon>Arachnida</taxon>
        <taxon>Scorpiones</taxon>
        <taxon>Buthida</taxon>
        <taxon>Buthoidea</taxon>
        <taxon>Buthidae</taxon>
        <taxon>Centruroides</taxon>
    </lineage>
</organism>
<accession>P45629</accession>
<evidence type="ECO:0000250" key="1"/>
<evidence type="ECO:0000250" key="2">
    <source>
        <dbReference type="UniProtKB" id="P40755"/>
    </source>
</evidence>
<evidence type="ECO:0000269" key="3">
    <source>
    </source>
</evidence>
<evidence type="ECO:0000269" key="4">
    <source>
    </source>
</evidence>
<evidence type="ECO:0000303" key="5">
    <source>
    </source>
</evidence>
<evidence type="ECO:0000305" key="6"/>
<evidence type="ECO:0000305" key="7">
    <source>
    </source>
</evidence>
<reference key="1">
    <citation type="journal article" date="1994" name="Biochem. J.">
        <title>Novel K(+)-channel-blocking toxins from the venom of the scorpion Centruroides limpidus limpidus Karsch.</title>
        <authorList>
            <person name="Martin B.M."/>
            <person name="Ramirez A.N."/>
            <person name="Gurrola G.B."/>
            <person name="Nobile M."/>
            <person name="Prestipino G."/>
            <person name="Possani L.D."/>
        </authorList>
    </citation>
    <scope>PROTEIN SEQUENCE</scope>
    <scope>SUBCELLULAR LOCATION</scope>
    <scope>FUNCTION</scope>
    <scope>MASS SPECTROMETRY</scope>
    <source>
        <tissue>Venom</tissue>
    </source>
</reference>
<reference key="2">
    <citation type="journal article" date="2017" name="Toxicon">
        <title>Comparative proteomic analysis of female and male venoms from the Mexican scorpion Centruroides limpidus: novel components found.</title>
        <authorList>
            <person name="Cid Uribe J.I."/>
            <person name="Jimenez Vargas J.M."/>
            <person name="Ferreira Batista C.V."/>
            <person name="Zamudio Zuniga F."/>
            <person name="Possani L.D."/>
        </authorList>
    </citation>
    <scope>PROTEIN SEQUENCE</scope>
    <scope>SUBCELLULAR LOCATION</scope>
    <source>
        <tissue>Venom</tissue>
    </source>
</reference>
<protein>
    <recommendedName>
        <fullName>Potassium channel toxin alpha-KTx 2.3</fullName>
    </recommendedName>
    <alternativeName>
        <fullName evidence="5">C.1.limpidus toxin 1</fullName>
        <shortName evidence="5">CllTx1</shortName>
    </alternativeName>
    <alternativeName>
        <fullName evidence="5">Toxin II.10.9.1</fullName>
    </alternativeName>
</protein>
<comment type="function">
    <text evidence="4">Inhibitor of voltage-gated potassium channels (Kv). It is capable of displacing the binding of radio-labeled noxiustoxin (AC P08815) to rat brain synaptosomes with high affinity (about 100 pM). It is also capable of inhibiting transient potassium-currents (resembling I(A)-type currents), in cultured rat cerebellar granule cells. About 50% of the peak currents are reduced by application of a 1.5 uM solution of this toxin.</text>
</comment>
<comment type="subcellular location">
    <subcellularLocation>
        <location evidence="3 4">Secreted</location>
    </subcellularLocation>
</comment>
<comment type="tissue specificity">
    <text evidence="7">Expressed by the venom gland.</text>
</comment>
<comment type="domain">
    <text evidence="2">Has the structural arrangement of an alpha-helix connected to a beta-sheet by disulfide bonds (CSalpha/beta).</text>
</comment>
<comment type="mass spectrometry"/>
<comment type="miscellaneous">
    <text evidence="3">This toxin is found in the venom of both male and female C.limpidus.</text>
</comment>
<comment type="similarity">
    <text evidence="6">Belongs to the short scorpion toxin superfamily. Potassium channel inhibitor family. Alpha-KTx 02 subfamily.</text>
</comment>